<comment type="function">
    <text evidence="1">Component of the spindle pole body (SPB) required for the proper execution of spindle pole body (SPB) duplication. Links the central plaque component SPC42 to the inner plaque component SPC110 (By similarity).</text>
</comment>
<comment type="subunit">
    <text evidence="1">Component of the SPC110 complex containing at least CMD1, SPC29, SPC42 and SCP110. Interacts with BBP1.</text>
</comment>
<comment type="subcellular location">
    <subcellularLocation>
        <location evidence="1">Nucleus</location>
    </subcellularLocation>
    <subcellularLocation>
        <location evidence="1">Cytoplasm</location>
        <location evidence="1">Cytoskeleton</location>
        <location evidence="1">Microtubule organizing center</location>
        <location evidence="1">Spindle pole body</location>
    </subcellularLocation>
</comment>
<comment type="PTM">
    <text evidence="1">MPS1-mediated phosphorylation at Thr-240 is required for spindle pole body duplication.</text>
</comment>
<comment type="similarity">
    <text evidence="4">Belongs to the SPC29 family.</text>
</comment>
<reference key="1">
    <citation type="journal article" date="2008" name="FEMS Yeast Res.">
        <title>Comparative genome analysis of a Saccharomyces cerevisiae wine strain.</title>
        <authorList>
            <person name="Borneman A.R."/>
            <person name="Forgan A.H."/>
            <person name="Pretorius I.S."/>
            <person name="Chambers P.J."/>
        </authorList>
    </citation>
    <scope>NUCLEOTIDE SEQUENCE [LARGE SCALE GENOMIC DNA]</scope>
    <source>
        <strain>AWRI1631</strain>
    </source>
</reference>
<gene>
    <name type="primary">SPC29</name>
    <name type="synonym">LPH3</name>
    <name type="synonym">NIP29</name>
    <name type="ORF">AWRI1631_161400</name>
</gene>
<proteinExistence type="inferred from homology"/>
<dbReference type="EMBL" id="ABSV01002327">
    <property type="protein sequence ID" value="EDZ68902.1"/>
    <property type="molecule type" value="Genomic_DNA"/>
</dbReference>
<dbReference type="SMR" id="B5VT41"/>
<dbReference type="Proteomes" id="UP000008988">
    <property type="component" value="Unassembled WGS sequence"/>
</dbReference>
<dbReference type="GO" id="GO:0005823">
    <property type="term" value="C:central plaque of spindle pole body"/>
    <property type="evidence" value="ECO:0007669"/>
    <property type="project" value="InterPro"/>
</dbReference>
<dbReference type="GO" id="GO:0005737">
    <property type="term" value="C:cytoplasm"/>
    <property type="evidence" value="ECO:0007669"/>
    <property type="project" value="UniProtKB-KW"/>
</dbReference>
<dbReference type="GO" id="GO:0005634">
    <property type="term" value="C:nucleus"/>
    <property type="evidence" value="ECO:0007669"/>
    <property type="project" value="UniProtKB-SubCell"/>
</dbReference>
<dbReference type="GO" id="GO:0005200">
    <property type="term" value="F:structural constituent of cytoskeleton"/>
    <property type="evidence" value="ECO:0007669"/>
    <property type="project" value="InterPro"/>
</dbReference>
<dbReference type="GO" id="GO:0030474">
    <property type="term" value="P:spindle pole body duplication"/>
    <property type="evidence" value="ECO:0007669"/>
    <property type="project" value="InterPro"/>
</dbReference>
<dbReference type="InterPro" id="IPR031392">
    <property type="entry name" value="Spc29"/>
</dbReference>
<dbReference type="Pfam" id="PF17082">
    <property type="entry name" value="Spc29"/>
    <property type="match status" value="1"/>
</dbReference>
<sequence>MDYSNFGNSASKKFQDDTLNRVRKEHEEALKKLREENFSSNTSELGNKKHYRAQERMSSPLHRLSPTGKSDDRKVKSPLDDKLRRQLREGNTRLPPPPFSSYGMPPTNRSNLDRIRRRTSSPVRTDKFASQNVIDDQRLEIKYLERIVYDQGTVIDNLTSRITRLESFILNSISDRGDKNFASLEHSRSFSGFPTNKTYGLQMGGLYENDMPYRRSSDNINKEGAREDRSSQIHIENESTEDILKILSSSFHN</sequence>
<accession>B5VT41</accession>
<keyword id="KW-0963">Cytoplasm</keyword>
<keyword id="KW-0206">Cytoskeleton</keyword>
<keyword id="KW-0539">Nucleus</keyword>
<keyword id="KW-0597">Phosphoprotein</keyword>
<protein>
    <recommendedName>
        <fullName>Spindle pole component 29</fullName>
    </recommendedName>
</protein>
<name>SPC29_YEAS6</name>
<feature type="chain" id="PRO_0000409190" description="Spindle pole component 29">
    <location>
        <begin position="1"/>
        <end position="253"/>
    </location>
</feature>
<feature type="region of interest" description="Disordered" evidence="3">
    <location>
        <begin position="1"/>
        <end position="20"/>
    </location>
</feature>
<feature type="region of interest" description="Disordered" evidence="3">
    <location>
        <begin position="31"/>
        <end position="123"/>
    </location>
</feature>
<feature type="region of interest" description="Disordered" evidence="3">
    <location>
        <begin position="210"/>
        <end position="231"/>
    </location>
</feature>
<feature type="compositionally biased region" description="Polar residues" evidence="3">
    <location>
        <begin position="1"/>
        <end position="12"/>
    </location>
</feature>
<feature type="compositionally biased region" description="Basic and acidic residues" evidence="3">
    <location>
        <begin position="69"/>
        <end position="91"/>
    </location>
</feature>
<feature type="compositionally biased region" description="Basic and acidic residues" evidence="3">
    <location>
        <begin position="211"/>
        <end position="231"/>
    </location>
</feature>
<feature type="modified residue" description="Phosphothreonine" evidence="2">
    <location>
        <position position="18"/>
    </location>
</feature>
<feature type="modified residue" description="Phosphoserine" evidence="2">
    <location>
        <position position="65"/>
    </location>
</feature>
<feature type="modified residue" description="Phosphothreonine; by MPS1" evidence="2">
    <location>
        <position position="240"/>
    </location>
</feature>
<evidence type="ECO:0000250" key="1"/>
<evidence type="ECO:0000250" key="2">
    <source>
        <dbReference type="UniProtKB" id="P33419"/>
    </source>
</evidence>
<evidence type="ECO:0000256" key="3">
    <source>
        <dbReference type="SAM" id="MobiDB-lite"/>
    </source>
</evidence>
<evidence type="ECO:0000305" key="4"/>
<organism>
    <name type="scientific">Saccharomyces cerevisiae (strain AWRI1631)</name>
    <name type="common">Baker's yeast</name>
    <dbReference type="NCBI Taxonomy" id="545124"/>
    <lineage>
        <taxon>Eukaryota</taxon>
        <taxon>Fungi</taxon>
        <taxon>Dikarya</taxon>
        <taxon>Ascomycota</taxon>
        <taxon>Saccharomycotina</taxon>
        <taxon>Saccharomycetes</taxon>
        <taxon>Saccharomycetales</taxon>
        <taxon>Saccharomycetaceae</taxon>
        <taxon>Saccharomyces</taxon>
    </lineage>
</organism>